<gene>
    <name evidence="1" type="primary">yceH</name>
    <name type="ordered locus">ECH74115_1446</name>
</gene>
<name>YCEH_ECO5E</name>
<sequence>MKYQLTALEARVIGCLLEKQVTTPEQYPLSVNGVVTACNQKTNREPVMNLSESEVQEQLDNLVKRHYLRTVSGFGNRVTKYEQRFCNSEFGDLKLSAAEVALITTLLLRGAQTPGELRSRAARMYEFSDMAEVELTLEQLANREDGPFVVRLAREPGKRESRYMHLFSGEVEDQPAVTDMSNAVDGDLQARVEALEIEVAELKQRLDSLLAHLGD</sequence>
<protein>
    <recommendedName>
        <fullName evidence="1">UPF0502 protein YceH</fullName>
    </recommendedName>
</protein>
<keyword id="KW-0007">Acetylation</keyword>
<evidence type="ECO:0000255" key="1">
    <source>
        <dbReference type="HAMAP-Rule" id="MF_01584"/>
    </source>
</evidence>
<reference key="1">
    <citation type="journal article" date="2011" name="Proc. Natl. Acad. Sci. U.S.A.">
        <title>Genomic anatomy of Escherichia coli O157:H7 outbreaks.</title>
        <authorList>
            <person name="Eppinger M."/>
            <person name="Mammel M.K."/>
            <person name="Leclerc J.E."/>
            <person name="Ravel J."/>
            <person name="Cebula T.A."/>
        </authorList>
    </citation>
    <scope>NUCLEOTIDE SEQUENCE [LARGE SCALE GENOMIC DNA]</scope>
    <source>
        <strain>EC4115 / EHEC</strain>
    </source>
</reference>
<accession>B5YVT7</accession>
<organism>
    <name type="scientific">Escherichia coli O157:H7 (strain EC4115 / EHEC)</name>
    <dbReference type="NCBI Taxonomy" id="444450"/>
    <lineage>
        <taxon>Bacteria</taxon>
        <taxon>Pseudomonadati</taxon>
        <taxon>Pseudomonadota</taxon>
        <taxon>Gammaproteobacteria</taxon>
        <taxon>Enterobacterales</taxon>
        <taxon>Enterobacteriaceae</taxon>
        <taxon>Escherichia</taxon>
    </lineage>
</organism>
<proteinExistence type="inferred from homology"/>
<dbReference type="EMBL" id="CP001164">
    <property type="protein sequence ID" value="ACI35296.1"/>
    <property type="molecule type" value="Genomic_DNA"/>
</dbReference>
<dbReference type="RefSeq" id="WP_000877099.1">
    <property type="nucleotide sequence ID" value="NC_011353.1"/>
</dbReference>
<dbReference type="SMR" id="B5YVT7"/>
<dbReference type="KEGG" id="ecf:ECH74115_1446"/>
<dbReference type="HOGENOM" id="CLU_057831_2_0_6"/>
<dbReference type="FunFam" id="1.10.10.10:FF:000196">
    <property type="entry name" value="UPF0502 protein YceH"/>
    <property type="match status" value="1"/>
</dbReference>
<dbReference type="FunFam" id="1.10.10.10:FF:000241">
    <property type="entry name" value="UPF0502 protein YceH"/>
    <property type="match status" value="1"/>
</dbReference>
<dbReference type="Gene3D" id="1.10.10.10">
    <property type="entry name" value="Winged helix-like DNA-binding domain superfamily/Winged helix DNA-binding domain"/>
    <property type="match status" value="2"/>
</dbReference>
<dbReference type="HAMAP" id="MF_01584">
    <property type="entry name" value="UPF0502"/>
    <property type="match status" value="1"/>
</dbReference>
<dbReference type="InterPro" id="IPR007432">
    <property type="entry name" value="DUF480"/>
</dbReference>
<dbReference type="InterPro" id="IPR036388">
    <property type="entry name" value="WH-like_DNA-bd_sf"/>
</dbReference>
<dbReference type="InterPro" id="IPR036390">
    <property type="entry name" value="WH_DNA-bd_sf"/>
</dbReference>
<dbReference type="NCBIfam" id="NF008413">
    <property type="entry name" value="PRK11239.1"/>
    <property type="match status" value="1"/>
</dbReference>
<dbReference type="PANTHER" id="PTHR38768">
    <property type="entry name" value="UPF0502 PROTEIN YCEH"/>
    <property type="match status" value="1"/>
</dbReference>
<dbReference type="PANTHER" id="PTHR38768:SF1">
    <property type="entry name" value="UPF0502 PROTEIN YCEH"/>
    <property type="match status" value="1"/>
</dbReference>
<dbReference type="Pfam" id="PF04337">
    <property type="entry name" value="DUF480"/>
    <property type="match status" value="1"/>
</dbReference>
<dbReference type="SUPFAM" id="SSF46785">
    <property type="entry name" value="Winged helix' DNA-binding domain"/>
    <property type="match status" value="2"/>
</dbReference>
<feature type="chain" id="PRO_1000201242" description="UPF0502 protein YceH">
    <location>
        <begin position="1"/>
        <end position="215"/>
    </location>
</feature>
<feature type="modified residue" description="N6-acetyllysine" evidence="1">
    <location>
        <position position="80"/>
    </location>
</feature>
<comment type="similarity">
    <text evidence="1">Belongs to the UPF0502 family.</text>
</comment>